<keyword id="KW-0028">Amino-acid biosynthesis</keyword>
<keyword id="KW-0963">Cytoplasm</keyword>
<keyword id="KW-0368">Histidine biosynthesis</keyword>
<keyword id="KW-0456">Lyase</keyword>
<keyword id="KW-1185">Reference proteome</keyword>
<proteinExistence type="inferred from homology"/>
<reference key="1">
    <citation type="journal article" date="2004" name="Mol. Plant Microbe Interact.">
        <title>The genome sequence of the Gram-positive sugarcane pathogen Leifsonia xyli subsp. xyli.</title>
        <authorList>
            <person name="Monteiro-Vitorello C.B."/>
            <person name="Camargo L.E.A."/>
            <person name="Van Sluys M.A."/>
            <person name="Kitajima J.P."/>
            <person name="Truffi D."/>
            <person name="do Amaral A.M."/>
            <person name="Harakava R."/>
            <person name="de Oliveira J.C.F."/>
            <person name="Wood D."/>
            <person name="de Oliveira M.C."/>
            <person name="Miyaki C.Y."/>
            <person name="Takita M.A."/>
            <person name="da Silva A.C.R."/>
            <person name="Furlan L.R."/>
            <person name="Carraro D.M."/>
            <person name="Camarotte G."/>
            <person name="Almeida N.F. Jr."/>
            <person name="Carrer H."/>
            <person name="Coutinho L.L."/>
            <person name="El-Dorry H.A."/>
            <person name="Ferro M.I.T."/>
            <person name="Gagliardi P.R."/>
            <person name="Giglioti E."/>
            <person name="Goldman M.H.S."/>
            <person name="Goldman G.H."/>
            <person name="Kimura E.T."/>
            <person name="Ferro E.S."/>
            <person name="Kuramae E.E."/>
            <person name="Lemos E.G.M."/>
            <person name="Lemos M.V.F."/>
            <person name="Mauro S.M.Z."/>
            <person name="Machado M.A."/>
            <person name="Marino C.L."/>
            <person name="Menck C.F."/>
            <person name="Nunes L.R."/>
            <person name="Oliveira R.C."/>
            <person name="Pereira G.G."/>
            <person name="Siqueira W."/>
            <person name="de Souza A.A."/>
            <person name="Tsai S.M."/>
            <person name="Zanca A.S."/>
            <person name="Simpson A.J.G."/>
            <person name="Brumbley S.M."/>
            <person name="Setubal J.C."/>
        </authorList>
    </citation>
    <scope>NUCLEOTIDE SEQUENCE [LARGE SCALE GENOMIC DNA]</scope>
    <source>
        <strain>CTCB07</strain>
    </source>
</reference>
<protein>
    <recommendedName>
        <fullName evidence="1">Imidazoleglycerol-phosphate dehydratase</fullName>
        <shortName evidence="1">IGPD</shortName>
        <ecNumber evidence="1">4.2.1.19</ecNumber>
    </recommendedName>
</protein>
<name>HIS7_LEIXX</name>
<comment type="catalytic activity">
    <reaction evidence="1">
        <text>D-erythro-1-(imidazol-4-yl)glycerol 3-phosphate = 3-(imidazol-4-yl)-2-oxopropyl phosphate + H2O</text>
        <dbReference type="Rhea" id="RHEA:11040"/>
        <dbReference type="ChEBI" id="CHEBI:15377"/>
        <dbReference type="ChEBI" id="CHEBI:57766"/>
        <dbReference type="ChEBI" id="CHEBI:58278"/>
        <dbReference type="EC" id="4.2.1.19"/>
    </reaction>
</comment>
<comment type="pathway">
    <text evidence="1">Amino-acid biosynthesis; L-histidine biosynthesis; L-histidine from 5-phospho-alpha-D-ribose 1-diphosphate: step 6/9.</text>
</comment>
<comment type="subcellular location">
    <subcellularLocation>
        <location evidence="1">Cytoplasm</location>
    </subcellularLocation>
</comment>
<comment type="similarity">
    <text evidence="1">Belongs to the imidazoleglycerol-phosphate dehydratase family.</text>
</comment>
<accession>Q6AE13</accession>
<sequence length="200" mass="21439">MTNRTASLRRETSESGIELSLDLDGTGASEIHTSVPFYDHLLTAFAKHSLTDLRVRASGDTEIDVHHTVEDVGIVLGQAIRQALGDKAGLSRYGDALVPLDEALVQAVVDLSGRPYLVHAGEPSGFEFHLIGGHFTGSMVRHVFEAISFNAAITTHVTVVGGRDPHHIAEAEFKAFARAFRQAKAYDPLVSGIPSTKGAL</sequence>
<gene>
    <name evidence="1" type="primary">hisB</name>
    <name type="ordered locus">Lxx15850</name>
</gene>
<evidence type="ECO:0000255" key="1">
    <source>
        <dbReference type="HAMAP-Rule" id="MF_00076"/>
    </source>
</evidence>
<feature type="chain" id="PRO_0000158136" description="Imidazoleglycerol-phosphate dehydratase">
    <location>
        <begin position="1"/>
        <end position="200"/>
    </location>
</feature>
<dbReference type="EC" id="4.2.1.19" evidence="1"/>
<dbReference type="EMBL" id="AE016822">
    <property type="protein sequence ID" value="AAT89383.1"/>
    <property type="molecule type" value="Genomic_DNA"/>
</dbReference>
<dbReference type="RefSeq" id="WP_011186372.1">
    <property type="nucleotide sequence ID" value="NC_006087.1"/>
</dbReference>
<dbReference type="SMR" id="Q6AE13"/>
<dbReference type="STRING" id="281090.Lxx15850"/>
<dbReference type="KEGG" id="lxx:Lxx15850"/>
<dbReference type="eggNOG" id="COG0131">
    <property type="taxonomic scope" value="Bacteria"/>
</dbReference>
<dbReference type="HOGENOM" id="CLU_044308_3_0_11"/>
<dbReference type="UniPathway" id="UPA00031">
    <property type="reaction ID" value="UER00011"/>
</dbReference>
<dbReference type="Proteomes" id="UP000001306">
    <property type="component" value="Chromosome"/>
</dbReference>
<dbReference type="GO" id="GO:0005737">
    <property type="term" value="C:cytoplasm"/>
    <property type="evidence" value="ECO:0007669"/>
    <property type="project" value="UniProtKB-SubCell"/>
</dbReference>
<dbReference type="GO" id="GO:0004424">
    <property type="term" value="F:imidazoleglycerol-phosphate dehydratase activity"/>
    <property type="evidence" value="ECO:0007669"/>
    <property type="project" value="UniProtKB-UniRule"/>
</dbReference>
<dbReference type="GO" id="GO:0000105">
    <property type="term" value="P:L-histidine biosynthetic process"/>
    <property type="evidence" value="ECO:0007669"/>
    <property type="project" value="UniProtKB-UniRule"/>
</dbReference>
<dbReference type="CDD" id="cd07914">
    <property type="entry name" value="IGPD"/>
    <property type="match status" value="1"/>
</dbReference>
<dbReference type="FunFam" id="3.30.230.40:FF:000001">
    <property type="entry name" value="Imidazoleglycerol-phosphate dehydratase HisB"/>
    <property type="match status" value="1"/>
</dbReference>
<dbReference type="FunFam" id="3.30.230.40:FF:000003">
    <property type="entry name" value="Imidazoleglycerol-phosphate dehydratase HisB"/>
    <property type="match status" value="1"/>
</dbReference>
<dbReference type="Gene3D" id="3.30.230.40">
    <property type="entry name" value="Imidazole glycerol phosphate dehydratase, domain 1"/>
    <property type="match status" value="2"/>
</dbReference>
<dbReference type="HAMAP" id="MF_00076">
    <property type="entry name" value="HisB"/>
    <property type="match status" value="1"/>
</dbReference>
<dbReference type="InterPro" id="IPR038494">
    <property type="entry name" value="IGPD_sf"/>
</dbReference>
<dbReference type="InterPro" id="IPR000807">
    <property type="entry name" value="ImidazoleglycerolP_deHydtase"/>
</dbReference>
<dbReference type="InterPro" id="IPR020565">
    <property type="entry name" value="ImidazoleglycerP_deHydtase_CS"/>
</dbReference>
<dbReference type="InterPro" id="IPR020568">
    <property type="entry name" value="Ribosomal_Su5_D2-typ_SF"/>
</dbReference>
<dbReference type="NCBIfam" id="NF002110">
    <property type="entry name" value="PRK00951.1-6"/>
    <property type="match status" value="1"/>
</dbReference>
<dbReference type="NCBIfam" id="NF002111">
    <property type="entry name" value="PRK00951.2-1"/>
    <property type="match status" value="1"/>
</dbReference>
<dbReference type="NCBIfam" id="NF002114">
    <property type="entry name" value="PRK00951.2-4"/>
    <property type="match status" value="1"/>
</dbReference>
<dbReference type="PANTHER" id="PTHR23133:SF2">
    <property type="entry name" value="IMIDAZOLEGLYCEROL-PHOSPHATE DEHYDRATASE"/>
    <property type="match status" value="1"/>
</dbReference>
<dbReference type="PANTHER" id="PTHR23133">
    <property type="entry name" value="IMIDAZOLEGLYCEROL-PHOSPHATE DEHYDRATASE HIS7"/>
    <property type="match status" value="1"/>
</dbReference>
<dbReference type="Pfam" id="PF00475">
    <property type="entry name" value="IGPD"/>
    <property type="match status" value="1"/>
</dbReference>
<dbReference type="SUPFAM" id="SSF54211">
    <property type="entry name" value="Ribosomal protein S5 domain 2-like"/>
    <property type="match status" value="2"/>
</dbReference>
<dbReference type="PROSITE" id="PS00954">
    <property type="entry name" value="IGP_DEHYDRATASE_1"/>
    <property type="match status" value="1"/>
</dbReference>
<dbReference type="PROSITE" id="PS00955">
    <property type="entry name" value="IGP_DEHYDRATASE_2"/>
    <property type="match status" value="1"/>
</dbReference>
<organism>
    <name type="scientific">Leifsonia xyli subsp. xyli (strain CTCB07)</name>
    <dbReference type="NCBI Taxonomy" id="281090"/>
    <lineage>
        <taxon>Bacteria</taxon>
        <taxon>Bacillati</taxon>
        <taxon>Actinomycetota</taxon>
        <taxon>Actinomycetes</taxon>
        <taxon>Micrococcales</taxon>
        <taxon>Microbacteriaceae</taxon>
        <taxon>Leifsonia</taxon>
    </lineage>
</organism>